<proteinExistence type="inferred from homology"/>
<name>RSMG_CROS8</name>
<evidence type="ECO:0000255" key="1">
    <source>
        <dbReference type="HAMAP-Rule" id="MF_00074"/>
    </source>
</evidence>
<reference key="1">
    <citation type="journal article" date="2010" name="PLoS ONE">
        <title>Genome sequence of Cronobacter sakazakii BAA-894 and comparative genomic hybridization analysis with other Cronobacter species.</title>
        <authorList>
            <person name="Kucerova E."/>
            <person name="Clifton S.W."/>
            <person name="Xia X.Q."/>
            <person name="Long F."/>
            <person name="Porwollik S."/>
            <person name="Fulton L."/>
            <person name="Fronick C."/>
            <person name="Minx P."/>
            <person name="Kyung K."/>
            <person name="Warren W."/>
            <person name="Fulton R."/>
            <person name="Feng D."/>
            <person name="Wollam A."/>
            <person name="Shah N."/>
            <person name="Bhonagiri V."/>
            <person name="Nash W.E."/>
            <person name="Hallsworth-Pepin K."/>
            <person name="Wilson R.K."/>
            <person name="McClelland M."/>
            <person name="Forsythe S.J."/>
        </authorList>
    </citation>
    <scope>NUCLEOTIDE SEQUENCE [LARGE SCALE GENOMIC DNA]</scope>
    <source>
        <strain>ATCC BAA-894</strain>
    </source>
</reference>
<gene>
    <name evidence="1" type="primary">rsmG</name>
    <name type="ordered locus">ESA_04014</name>
</gene>
<comment type="function">
    <text evidence="1">Specifically methylates the N7 position of guanine in position 527 of 16S rRNA.</text>
</comment>
<comment type="catalytic activity">
    <reaction evidence="1">
        <text>guanosine(527) in 16S rRNA + S-adenosyl-L-methionine = N(7)-methylguanosine(527) in 16S rRNA + S-adenosyl-L-homocysteine</text>
        <dbReference type="Rhea" id="RHEA:42732"/>
        <dbReference type="Rhea" id="RHEA-COMP:10209"/>
        <dbReference type="Rhea" id="RHEA-COMP:10210"/>
        <dbReference type="ChEBI" id="CHEBI:57856"/>
        <dbReference type="ChEBI" id="CHEBI:59789"/>
        <dbReference type="ChEBI" id="CHEBI:74269"/>
        <dbReference type="ChEBI" id="CHEBI:74480"/>
        <dbReference type="EC" id="2.1.1.170"/>
    </reaction>
</comment>
<comment type="subcellular location">
    <subcellularLocation>
        <location evidence="1">Cytoplasm</location>
    </subcellularLocation>
</comment>
<comment type="similarity">
    <text evidence="1">Belongs to the methyltransferase superfamily. RNA methyltransferase RsmG family.</text>
</comment>
<dbReference type="EC" id="2.1.1.170" evidence="1"/>
<dbReference type="EMBL" id="CP000783">
    <property type="protein sequence ID" value="ABU79200.1"/>
    <property type="molecule type" value="Genomic_DNA"/>
</dbReference>
<dbReference type="RefSeq" id="WP_012126196.1">
    <property type="nucleotide sequence ID" value="NC_009778.1"/>
</dbReference>
<dbReference type="SMR" id="A7MMW2"/>
<dbReference type="GeneID" id="56732654"/>
<dbReference type="KEGG" id="esa:ESA_04014"/>
<dbReference type="PATRIC" id="fig|290339.8.peg.3562"/>
<dbReference type="HOGENOM" id="CLU_065341_2_2_6"/>
<dbReference type="Proteomes" id="UP000000260">
    <property type="component" value="Chromosome"/>
</dbReference>
<dbReference type="GO" id="GO:0005829">
    <property type="term" value="C:cytosol"/>
    <property type="evidence" value="ECO:0007669"/>
    <property type="project" value="TreeGrafter"/>
</dbReference>
<dbReference type="GO" id="GO:0070043">
    <property type="term" value="F:rRNA (guanine-N7-)-methyltransferase activity"/>
    <property type="evidence" value="ECO:0007669"/>
    <property type="project" value="UniProtKB-UniRule"/>
</dbReference>
<dbReference type="CDD" id="cd02440">
    <property type="entry name" value="AdoMet_MTases"/>
    <property type="match status" value="1"/>
</dbReference>
<dbReference type="FunFam" id="3.40.50.150:FF:000032">
    <property type="entry name" value="Ribosomal RNA small subunit methyltransferase G"/>
    <property type="match status" value="1"/>
</dbReference>
<dbReference type="Gene3D" id="3.40.50.150">
    <property type="entry name" value="Vaccinia Virus protein VP39"/>
    <property type="match status" value="1"/>
</dbReference>
<dbReference type="HAMAP" id="MF_00074">
    <property type="entry name" value="16SrRNA_methyltr_G"/>
    <property type="match status" value="1"/>
</dbReference>
<dbReference type="InterPro" id="IPR003682">
    <property type="entry name" value="rRNA_ssu_MeTfrase_G"/>
</dbReference>
<dbReference type="InterPro" id="IPR029063">
    <property type="entry name" value="SAM-dependent_MTases_sf"/>
</dbReference>
<dbReference type="NCBIfam" id="TIGR00138">
    <property type="entry name" value="rsmG_gidB"/>
    <property type="match status" value="1"/>
</dbReference>
<dbReference type="PANTHER" id="PTHR31760">
    <property type="entry name" value="S-ADENOSYL-L-METHIONINE-DEPENDENT METHYLTRANSFERASES SUPERFAMILY PROTEIN"/>
    <property type="match status" value="1"/>
</dbReference>
<dbReference type="PANTHER" id="PTHR31760:SF0">
    <property type="entry name" value="S-ADENOSYL-L-METHIONINE-DEPENDENT METHYLTRANSFERASES SUPERFAMILY PROTEIN"/>
    <property type="match status" value="1"/>
</dbReference>
<dbReference type="Pfam" id="PF02527">
    <property type="entry name" value="GidB"/>
    <property type="match status" value="1"/>
</dbReference>
<dbReference type="PIRSF" id="PIRSF003078">
    <property type="entry name" value="GidB"/>
    <property type="match status" value="1"/>
</dbReference>
<dbReference type="SUPFAM" id="SSF53335">
    <property type="entry name" value="S-adenosyl-L-methionine-dependent methyltransferases"/>
    <property type="match status" value="1"/>
</dbReference>
<feature type="chain" id="PRO_1000010143" description="Ribosomal RNA small subunit methyltransferase G">
    <location>
        <begin position="1"/>
        <end position="207"/>
    </location>
</feature>
<feature type="binding site" evidence="1">
    <location>
        <position position="73"/>
    </location>
    <ligand>
        <name>S-adenosyl-L-methionine</name>
        <dbReference type="ChEBI" id="CHEBI:59789"/>
    </ligand>
</feature>
<feature type="binding site" evidence="1">
    <location>
        <position position="78"/>
    </location>
    <ligand>
        <name>S-adenosyl-L-methionine</name>
        <dbReference type="ChEBI" id="CHEBI:59789"/>
    </ligand>
</feature>
<feature type="binding site" evidence="1">
    <location>
        <begin position="124"/>
        <end position="125"/>
    </location>
    <ligand>
        <name>S-adenosyl-L-methionine</name>
        <dbReference type="ChEBI" id="CHEBI:59789"/>
    </ligand>
</feature>
<feature type="binding site" evidence="1">
    <location>
        <position position="139"/>
    </location>
    <ligand>
        <name>S-adenosyl-L-methionine</name>
        <dbReference type="ChEBI" id="CHEBI:59789"/>
    </ligand>
</feature>
<protein>
    <recommendedName>
        <fullName evidence="1">Ribosomal RNA small subunit methyltransferase G</fullName>
        <ecNumber evidence="1">2.1.1.170</ecNumber>
    </recommendedName>
    <alternativeName>
        <fullName evidence="1">16S rRNA 7-methylguanosine methyltransferase</fullName>
        <shortName evidence="1">16S rRNA m7G methyltransferase</shortName>
    </alternativeName>
</protein>
<sequence>MLNTLTRLLDDAGITLPEHQKAQLVAYVDMLNKWNKAYNLTSVRDPNEMLVRHIMDSIVVEPHLKGTRFIDVGTGPGLPGIPLAIVRPDSHFTLLDSLGKRVRFLRQVQHELKLDNITPVQSRVEAFPAEPPFDGVISRAFASLSDMVNWCHHLPGEEGRFYALKGQRPDDEISALPSGFAVEEIVRLSVPRLDGERHLVILKANRT</sequence>
<keyword id="KW-0963">Cytoplasm</keyword>
<keyword id="KW-0489">Methyltransferase</keyword>
<keyword id="KW-1185">Reference proteome</keyword>
<keyword id="KW-0698">rRNA processing</keyword>
<keyword id="KW-0949">S-adenosyl-L-methionine</keyword>
<keyword id="KW-0808">Transferase</keyword>
<organism>
    <name type="scientific">Cronobacter sakazakii (strain ATCC BAA-894)</name>
    <name type="common">Enterobacter sakazakii</name>
    <dbReference type="NCBI Taxonomy" id="290339"/>
    <lineage>
        <taxon>Bacteria</taxon>
        <taxon>Pseudomonadati</taxon>
        <taxon>Pseudomonadota</taxon>
        <taxon>Gammaproteobacteria</taxon>
        <taxon>Enterobacterales</taxon>
        <taxon>Enterobacteriaceae</taxon>
        <taxon>Cronobacter</taxon>
    </lineage>
</organism>
<accession>A7MMW2</accession>